<sequence>MENDCTVNIVSLEKDRDVSEASAESQSESTLSNSLDSGVTAETSRSDADSKLDECTAWTNEKHNSYLDYLESSFVRQLYSLLGGGTQRLSRTRDVQSNSHKSADQFTVLQNGCWQKVNFGKKQSCLETSSEFRFHRNSLRNKPENSNGNYTMGTTVQGDVLCHDETKHSEASGQNFREEEEEEEKGEVSKKREREANNDDSSLKEDQVVPVRMVKPRT</sequence>
<accession>Q8L983</accession>
<accession>O81766</accession>
<comment type="function">
    <text evidence="5 6">Together with COR27, involved in central circadian clock regulation and in flowering promotion, by binding to the chromatin of clock-associated evening genes TOC1, PRR5, ELF4 and cold-responsive genes in order to repress their transcription (PubMed:27837007, PubMed:27990760). Negative regulator of freezing tolerance (PubMed:27837007).</text>
</comment>
<comment type="subcellular location">
    <subcellularLocation>
        <location evidence="6">Nucleus</location>
    </subcellularLocation>
</comment>
<comment type="induction">
    <text evidence="2 3 4 5 6">Regulated by the circadian clock at warm growth temperatures as direct targets of CCA1, with highest levels from noon to dusk (PubMed:27837007, PubMed:27990760). Repressed by CCA1 at the transcription level via chromatin binding and in a temperature-dependent way (PubMed:27837007, PubMed:27990760). Induced by cold (PubMed:12172015, PubMed:16121258, PubMed:27837007). Induced by abscisic acid (ABA) (PubMed:17304219). Transcription is repressed by blue and red lights, but induced by darkness; by contrast, present at low levels in darkness but accumulates in blue light (at protein level) due to transcription auto-repression (PubMed:27837007).</text>
</comment>
<comment type="disruption phenotype">
    <text evidence="5 6">Period lengthening of various circadian output rhythms and affected central clock gene expression (PubMed:27837007). Derepressed expression of circadian-regulated and cold-responsive genes (PubMed:27990760). Delayed flowering under long days conditions, and slightly in short days (PubMed:27837007). Increased freezing tolerance (PubMed:27837007).</text>
</comment>
<comment type="sequence caution" evidence="8">
    <conflict type="erroneous gene model prediction">
        <sequence resource="EMBL-CDS" id="CAA19880"/>
    </conflict>
</comment>
<comment type="sequence caution" evidence="8">
    <conflict type="erroneous gene model prediction">
        <sequence resource="EMBL-CDS" id="CAB80115"/>
    </conflict>
</comment>
<keyword id="KW-0090">Biological rhythms</keyword>
<keyword id="KW-0539">Nucleus</keyword>
<keyword id="KW-1185">Reference proteome</keyword>
<keyword id="KW-0678">Repressor</keyword>
<keyword id="KW-0804">Transcription</keyword>
<keyword id="KW-0805">Transcription regulation</keyword>
<evidence type="ECO:0000256" key="1">
    <source>
        <dbReference type="SAM" id="MobiDB-lite"/>
    </source>
</evidence>
<evidence type="ECO:0000269" key="2">
    <source>
    </source>
</evidence>
<evidence type="ECO:0000269" key="3">
    <source>
    </source>
</evidence>
<evidence type="ECO:0000269" key="4">
    <source>
    </source>
</evidence>
<evidence type="ECO:0000269" key="5">
    <source>
    </source>
</evidence>
<evidence type="ECO:0000269" key="6">
    <source>
    </source>
</evidence>
<evidence type="ECO:0000303" key="7">
    <source>
    </source>
</evidence>
<evidence type="ECO:0000305" key="8"/>
<evidence type="ECO:0000312" key="9">
    <source>
        <dbReference type="Araport" id="AT4G33980"/>
    </source>
</evidence>
<evidence type="ECO:0000312" key="10">
    <source>
        <dbReference type="EMBL" id="CAA19880.1"/>
    </source>
</evidence>
<organism>
    <name type="scientific">Arabidopsis thaliana</name>
    <name type="common">Mouse-ear cress</name>
    <dbReference type="NCBI Taxonomy" id="3702"/>
    <lineage>
        <taxon>Eukaryota</taxon>
        <taxon>Viridiplantae</taxon>
        <taxon>Streptophyta</taxon>
        <taxon>Embryophyta</taxon>
        <taxon>Tracheophyta</taxon>
        <taxon>Spermatophyta</taxon>
        <taxon>Magnoliopsida</taxon>
        <taxon>eudicotyledons</taxon>
        <taxon>Gunneridae</taxon>
        <taxon>Pentapetalae</taxon>
        <taxon>rosids</taxon>
        <taxon>malvids</taxon>
        <taxon>Brassicales</taxon>
        <taxon>Brassicaceae</taxon>
        <taxon>Camelineae</taxon>
        <taxon>Arabidopsis</taxon>
    </lineage>
</organism>
<proteinExistence type="evidence at protein level"/>
<protein>
    <recommendedName>
        <fullName evidence="7">Cold-regulated protein 28</fullName>
    </recommendedName>
</protein>
<reference key="1">
    <citation type="journal article" date="1999" name="Nature">
        <title>Sequence and analysis of chromosome 4 of the plant Arabidopsis thaliana.</title>
        <authorList>
            <person name="Mayer K.F.X."/>
            <person name="Schueller C."/>
            <person name="Wambutt R."/>
            <person name="Murphy G."/>
            <person name="Volckaert G."/>
            <person name="Pohl T."/>
            <person name="Duesterhoeft A."/>
            <person name="Stiekema W."/>
            <person name="Entian K.-D."/>
            <person name="Terryn N."/>
            <person name="Harris B."/>
            <person name="Ansorge W."/>
            <person name="Brandt P."/>
            <person name="Grivell L.A."/>
            <person name="Rieger M."/>
            <person name="Weichselgartner M."/>
            <person name="de Simone V."/>
            <person name="Obermaier B."/>
            <person name="Mache R."/>
            <person name="Mueller M."/>
            <person name="Kreis M."/>
            <person name="Delseny M."/>
            <person name="Puigdomenech P."/>
            <person name="Watson M."/>
            <person name="Schmidtheini T."/>
            <person name="Reichert B."/>
            <person name="Portetelle D."/>
            <person name="Perez-Alonso M."/>
            <person name="Boutry M."/>
            <person name="Bancroft I."/>
            <person name="Vos P."/>
            <person name="Hoheisel J."/>
            <person name="Zimmermann W."/>
            <person name="Wedler H."/>
            <person name="Ridley P."/>
            <person name="Langham S.-A."/>
            <person name="McCullagh B."/>
            <person name="Bilham L."/>
            <person name="Robben J."/>
            <person name="van der Schueren J."/>
            <person name="Grymonprez B."/>
            <person name="Chuang Y.-J."/>
            <person name="Vandenbussche F."/>
            <person name="Braeken M."/>
            <person name="Weltjens I."/>
            <person name="Voet M."/>
            <person name="Bastiaens I."/>
            <person name="Aert R."/>
            <person name="Defoor E."/>
            <person name="Weitzenegger T."/>
            <person name="Bothe G."/>
            <person name="Ramsperger U."/>
            <person name="Hilbert H."/>
            <person name="Braun M."/>
            <person name="Holzer E."/>
            <person name="Brandt A."/>
            <person name="Peters S."/>
            <person name="van Staveren M."/>
            <person name="Dirkse W."/>
            <person name="Mooijman P."/>
            <person name="Klein Lankhorst R."/>
            <person name="Rose M."/>
            <person name="Hauf J."/>
            <person name="Koetter P."/>
            <person name="Berneiser S."/>
            <person name="Hempel S."/>
            <person name="Feldpausch M."/>
            <person name="Lamberth S."/>
            <person name="Van den Daele H."/>
            <person name="De Keyser A."/>
            <person name="Buysshaert C."/>
            <person name="Gielen J."/>
            <person name="Villarroel R."/>
            <person name="De Clercq R."/>
            <person name="van Montagu M."/>
            <person name="Rogers J."/>
            <person name="Cronin A."/>
            <person name="Quail M.A."/>
            <person name="Bray-Allen S."/>
            <person name="Clark L."/>
            <person name="Doggett J."/>
            <person name="Hall S."/>
            <person name="Kay M."/>
            <person name="Lennard N."/>
            <person name="McLay K."/>
            <person name="Mayes R."/>
            <person name="Pettett A."/>
            <person name="Rajandream M.A."/>
            <person name="Lyne M."/>
            <person name="Benes V."/>
            <person name="Rechmann S."/>
            <person name="Borkova D."/>
            <person name="Bloecker H."/>
            <person name="Scharfe M."/>
            <person name="Grimm M."/>
            <person name="Loehnert T.-H."/>
            <person name="Dose S."/>
            <person name="de Haan M."/>
            <person name="Maarse A.C."/>
            <person name="Schaefer M."/>
            <person name="Mueller-Auer S."/>
            <person name="Gabel C."/>
            <person name="Fuchs M."/>
            <person name="Fartmann B."/>
            <person name="Granderath K."/>
            <person name="Dauner D."/>
            <person name="Herzl A."/>
            <person name="Neumann S."/>
            <person name="Argiriou A."/>
            <person name="Vitale D."/>
            <person name="Liguori R."/>
            <person name="Piravandi E."/>
            <person name="Massenet O."/>
            <person name="Quigley F."/>
            <person name="Clabauld G."/>
            <person name="Muendlein A."/>
            <person name="Felber R."/>
            <person name="Schnabl S."/>
            <person name="Hiller R."/>
            <person name="Schmidt W."/>
            <person name="Lecharny A."/>
            <person name="Aubourg S."/>
            <person name="Chefdor F."/>
            <person name="Cooke R."/>
            <person name="Berger C."/>
            <person name="Monfort A."/>
            <person name="Casacuberta E."/>
            <person name="Gibbons T."/>
            <person name="Weber N."/>
            <person name="Vandenbol M."/>
            <person name="Bargues M."/>
            <person name="Terol J."/>
            <person name="Torres A."/>
            <person name="Perez-Perez A."/>
            <person name="Purnelle B."/>
            <person name="Bent E."/>
            <person name="Johnson S."/>
            <person name="Tacon D."/>
            <person name="Jesse T."/>
            <person name="Heijnen L."/>
            <person name="Schwarz S."/>
            <person name="Scholler P."/>
            <person name="Heber S."/>
            <person name="Francs P."/>
            <person name="Bielke C."/>
            <person name="Frishman D."/>
            <person name="Haase D."/>
            <person name="Lemcke K."/>
            <person name="Mewes H.-W."/>
            <person name="Stocker S."/>
            <person name="Zaccaria P."/>
            <person name="Bevan M."/>
            <person name="Wilson R.K."/>
            <person name="de la Bastide M."/>
            <person name="Habermann K."/>
            <person name="Parnell L."/>
            <person name="Dedhia N."/>
            <person name="Gnoj L."/>
            <person name="Schutz K."/>
            <person name="Huang E."/>
            <person name="Spiegel L."/>
            <person name="Sekhon M."/>
            <person name="Murray J."/>
            <person name="Sheet P."/>
            <person name="Cordes M."/>
            <person name="Abu-Threideh J."/>
            <person name="Stoneking T."/>
            <person name="Kalicki J."/>
            <person name="Graves T."/>
            <person name="Harmon G."/>
            <person name="Edwards J."/>
            <person name="Latreille P."/>
            <person name="Courtney L."/>
            <person name="Cloud J."/>
            <person name="Abbott A."/>
            <person name="Scott K."/>
            <person name="Johnson D."/>
            <person name="Minx P."/>
            <person name="Bentley D."/>
            <person name="Fulton B."/>
            <person name="Miller N."/>
            <person name="Greco T."/>
            <person name="Kemp K."/>
            <person name="Kramer J."/>
            <person name="Fulton L."/>
            <person name="Mardis E."/>
            <person name="Dante M."/>
            <person name="Pepin K."/>
            <person name="Hillier L.W."/>
            <person name="Nelson J."/>
            <person name="Spieth J."/>
            <person name="Ryan E."/>
            <person name="Andrews S."/>
            <person name="Geisel C."/>
            <person name="Layman D."/>
            <person name="Du H."/>
            <person name="Ali J."/>
            <person name="Berghoff A."/>
            <person name="Jones K."/>
            <person name="Drone K."/>
            <person name="Cotton M."/>
            <person name="Joshu C."/>
            <person name="Antonoiu B."/>
            <person name="Zidanic M."/>
            <person name="Strong C."/>
            <person name="Sun H."/>
            <person name="Lamar B."/>
            <person name="Yordan C."/>
            <person name="Ma P."/>
            <person name="Zhong J."/>
            <person name="Preston R."/>
            <person name="Vil D."/>
            <person name="Shekher M."/>
            <person name="Matero A."/>
            <person name="Shah R."/>
            <person name="Swaby I.K."/>
            <person name="O'Shaughnessy A."/>
            <person name="Rodriguez M."/>
            <person name="Hoffman J."/>
            <person name="Till S."/>
            <person name="Granat S."/>
            <person name="Shohdy N."/>
            <person name="Hasegawa A."/>
            <person name="Hameed A."/>
            <person name="Lodhi M."/>
            <person name="Johnson A."/>
            <person name="Chen E."/>
            <person name="Marra M.A."/>
            <person name="Martienssen R."/>
            <person name="McCombie W.R."/>
        </authorList>
    </citation>
    <scope>NUCLEOTIDE SEQUENCE [LARGE SCALE GENOMIC DNA]</scope>
    <source>
        <strain>cv. Columbia</strain>
    </source>
</reference>
<reference key="2">
    <citation type="journal article" date="2017" name="Plant J.">
        <title>Araport11: a complete reannotation of the Arabidopsis thaliana reference genome.</title>
        <authorList>
            <person name="Cheng C.Y."/>
            <person name="Krishnakumar V."/>
            <person name="Chan A.P."/>
            <person name="Thibaud-Nissen F."/>
            <person name="Schobel S."/>
            <person name="Town C.D."/>
        </authorList>
    </citation>
    <scope>GENOME REANNOTATION</scope>
    <source>
        <strain>cv. Columbia</strain>
    </source>
</reference>
<reference key="3">
    <citation type="submission" date="2006-02" db="EMBL/GenBank/DDBJ databases">
        <title>Arabidopsis ORF clones.</title>
        <authorList>
            <person name="Shinn P."/>
            <person name="Chen H."/>
            <person name="Kim C.J."/>
            <person name="Ecker J.R."/>
        </authorList>
    </citation>
    <scope>NUCLEOTIDE SEQUENCE [LARGE SCALE MRNA]</scope>
    <source>
        <strain>cv. Columbia</strain>
    </source>
</reference>
<reference key="4">
    <citation type="submission" date="2002-03" db="EMBL/GenBank/DDBJ databases">
        <title>Full-length cDNA from Arabidopsis thaliana.</title>
        <authorList>
            <person name="Brover V.V."/>
            <person name="Troukhan M.E."/>
            <person name="Alexandrov N.A."/>
            <person name="Lu Y.-P."/>
            <person name="Flavell R.B."/>
            <person name="Feldmann K.A."/>
        </authorList>
    </citation>
    <scope>NUCLEOTIDE SEQUENCE [LARGE SCALE MRNA]</scope>
</reference>
<reference key="5">
    <citation type="journal article" date="2002" name="Plant Cell">
        <title>Arabidopsis transcriptome profiling indicates that multiple regulatory pathways are activated during cold acclimation in addition to the CBF cold response pathway.</title>
        <authorList>
            <person name="Fowler S."/>
            <person name="Thomashow M.F."/>
        </authorList>
    </citation>
    <scope>INDUCTION BY COLD</scope>
</reference>
<reference key="6">
    <citation type="journal article" date="2005" name="PLoS Genet.">
        <title>A global survey of gene regulation during cold acclimation in Arabidopsis thaliana.</title>
        <authorList>
            <person name="Hannah M.A."/>
            <person name="Heyer A.G."/>
            <person name="Hincha D.K."/>
        </authorList>
    </citation>
    <scope>INDUCTION BY COLD</scope>
</reference>
<reference key="7">
    <citation type="journal article" date="2007" name="EMBO J.">
        <title>Pseudomonas syringae pv. tomato hijacks the Arabidopsis abscisic acid signalling pathway to cause disease.</title>
        <authorList>
            <person name="de Torres-Zabala M."/>
            <person name="Truman W."/>
            <person name="Bennett M.H."/>
            <person name="Lafforgue G."/>
            <person name="Mansfield J.W."/>
            <person name="Rodriguez Egea P."/>
            <person name="Boegre L."/>
            <person name="Grant M."/>
        </authorList>
    </citation>
    <scope>INDUCTION BY ABSCISIC ACID</scope>
</reference>
<reference key="8">
    <citation type="journal article" date="2016" name="Plant Cell">
        <title>Blue light- and low temperature-regulated COR27 and COR28 play roles in the Arabidopsis circadian clock.</title>
        <authorList>
            <person name="Li X."/>
            <person name="Ma D."/>
            <person name="Lu S.X."/>
            <person name="Hu X."/>
            <person name="Huang R."/>
            <person name="Liang T."/>
            <person name="Xu T."/>
            <person name="Tobin E.M."/>
            <person name="Liu H."/>
        </authorList>
    </citation>
    <scope>FUNCTION</scope>
    <scope>DISRUPTION PHENOTYPE</scope>
    <scope>REPRESSION BY CCA1</scope>
    <scope>INDUCTION BY DARKNESS AND COLD</scope>
    <source>
        <strain>cv. Columbia</strain>
    </source>
</reference>
<reference key="9">
    <citation type="journal article" date="2017" name="J. Integr. Plant Biol.">
        <title>COR27 and COR28 encode nighttime repressors integrating Arabidopsis circadian clock and cold response.</title>
        <authorList>
            <person name="Wang P."/>
            <person name="Cui X."/>
            <person name="Zhao C."/>
            <person name="Shi L."/>
            <person name="Zhang G."/>
            <person name="Sun F."/>
            <person name="Cao X."/>
            <person name="Yuan L."/>
            <person name="Xie Q."/>
            <person name="Xu X."/>
        </authorList>
    </citation>
    <scope>FUNCTION</scope>
    <scope>DISRUPTION PHENOTYPE</scope>
    <scope>INDUCTION BY DARKNESS AND COLD</scope>
    <scope>REPRESSION BY CCA1</scope>
    <scope>SUBCELLULAR LOCATION</scope>
    <source>
        <strain>cv. Columbia</strain>
    </source>
</reference>
<dbReference type="EMBL" id="AL031032">
    <property type="protein sequence ID" value="CAA19880.1"/>
    <property type="status" value="ALT_SEQ"/>
    <property type="molecule type" value="Genomic_DNA"/>
</dbReference>
<dbReference type="EMBL" id="AL161584">
    <property type="protein sequence ID" value="CAB80115.1"/>
    <property type="status" value="ALT_SEQ"/>
    <property type="molecule type" value="Genomic_DNA"/>
</dbReference>
<dbReference type="EMBL" id="CP002687">
    <property type="protein sequence ID" value="AEE86303.1"/>
    <property type="molecule type" value="Genomic_DNA"/>
</dbReference>
<dbReference type="EMBL" id="BT024609">
    <property type="protein sequence ID" value="ABD43007.1"/>
    <property type="molecule type" value="mRNA"/>
</dbReference>
<dbReference type="EMBL" id="AY088585">
    <property type="protein sequence ID" value="AAM66115.1"/>
    <property type="molecule type" value="mRNA"/>
</dbReference>
<dbReference type="PIR" id="T05226">
    <property type="entry name" value="T05226"/>
</dbReference>
<dbReference type="RefSeq" id="NP_567946.1">
    <property type="nucleotide sequence ID" value="NM_119559.3"/>
</dbReference>
<dbReference type="FunCoup" id="Q8L983">
    <property type="interactions" value="4"/>
</dbReference>
<dbReference type="STRING" id="3702.Q8L983"/>
<dbReference type="PaxDb" id="3702-AT4G33980.2"/>
<dbReference type="ProteomicsDB" id="185131"/>
<dbReference type="EnsemblPlants" id="AT4G33980.1">
    <property type="protein sequence ID" value="AT4G33980.1"/>
    <property type="gene ID" value="AT4G33980"/>
</dbReference>
<dbReference type="GeneID" id="829544"/>
<dbReference type="Gramene" id="AT4G33980.1">
    <property type="protein sequence ID" value="AT4G33980.1"/>
    <property type="gene ID" value="AT4G33980"/>
</dbReference>
<dbReference type="KEGG" id="ath:AT4G33980"/>
<dbReference type="Araport" id="AT4G33980"/>
<dbReference type="TAIR" id="AT4G33980">
    <property type="gene designation" value="COR28"/>
</dbReference>
<dbReference type="InParanoid" id="Q8L983"/>
<dbReference type="OMA" id="CHEETKH"/>
<dbReference type="OrthoDB" id="1104553at2759"/>
<dbReference type="PhylomeDB" id="Q8L983"/>
<dbReference type="PRO" id="PR:Q8L983"/>
<dbReference type="Proteomes" id="UP000006548">
    <property type="component" value="Chromosome 4"/>
</dbReference>
<dbReference type="ExpressionAtlas" id="Q8L983">
    <property type="expression patterns" value="baseline and differential"/>
</dbReference>
<dbReference type="GO" id="GO:0005634">
    <property type="term" value="C:nucleus"/>
    <property type="evidence" value="ECO:0000314"/>
    <property type="project" value="UniProtKB"/>
</dbReference>
<dbReference type="GO" id="GO:0045892">
    <property type="term" value="P:negative regulation of DNA-templated transcription"/>
    <property type="evidence" value="ECO:0000314"/>
    <property type="project" value="UniProtKB"/>
</dbReference>
<dbReference type="GO" id="GO:0042752">
    <property type="term" value="P:regulation of circadian rhythm"/>
    <property type="evidence" value="ECO:0000315"/>
    <property type="project" value="UniProtKB"/>
</dbReference>
<dbReference type="GO" id="GO:2000028">
    <property type="term" value="P:regulation of photoperiodism, flowering"/>
    <property type="evidence" value="ECO:0000315"/>
    <property type="project" value="UniProtKB"/>
</dbReference>
<dbReference type="GO" id="GO:0009737">
    <property type="term" value="P:response to abscisic acid"/>
    <property type="evidence" value="ECO:0000270"/>
    <property type="project" value="UniProtKB"/>
</dbReference>
<dbReference type="GO" id="GO:0009646">
    <property type="term" value="P:response to absence of light"/>
    <property type="evidence" value="ECO:0000270"/>
    <property type="project" value="UniProtKB"/>
</dbReference>
<dbReference type="GO" id="GO:0009637">
    <property type="term" value="P:response to blue light"/>
    <property type="evidence" value="ECO:0000270"/>
    <property type="project" value="UniProtKB"/>
</dbReference>
<dbReference type="GO" id="GO:0009409">
    <property type="term" value="P:response to cold"/>
    <property type="evidence" value="ECO:0000315"/>
    <property type="project" value="UniProtKB"/>
</dbReference>
<dbReference type="GO" id="GO:0010114">
    <property type="term" value="P:response to red light"/>
    <property type="evidence" value="ECO:0000270"/>
    <property type="project" value="UniProtKB"/>
</dbReference>
<dbReference type="GO" id="GO:0048511">
    <property type="term" value="P:rhythmic process"/>
    <property type="evidence" value="ECO:0007669"/>
    <property type="project" value="UniProtKB-KW"/>
</dbReference>
<dbReference type="InterPro" id="IPR044678">
    <property type="entry name" value="COR27/28"/>
</dbReference>
<dbReference type="PANTHER" id="PTHR33676">
    <property type="entry name" value="COLD REGULATED PROTEIN 27"/>
    <property type="match status" value="1"/>
</dbReference>
<dbReference type="PANTHER" id="PTHR33676:SF17">
    <property type="entry name" value="COLD-REGULATED PROTEIN 28"/>
    <property type="match status" value="1"/>
</dbReference>
<name>COR28_ARATH</name>
<feature type="chain" id="PRO_0000447853" description="Cold-regulated protein 28">
    <location>
        <begin position="1"/>
        <end position="218"/>
    </location>
</feature>
<feature type="region of interest" description="Disordered" evidence="1">
    <location>
        <begin position="1"/>
        <end position="51"/>
    </location>
</feature>
<feature type="region of interest" description="Disordered" evidence="1">
    <location>
        <begin position="166"/>
        <end position="218"/>
    </location>
</feature>
<feature type="compositionally biased region" description="Low complexity" evidence="1">
    <location>
        <begin position="20"/>
        <end position="37"/>
    </location>
</feature>
<feature type="compositionally biased region" description="Basic and acidic residues" evidence="1">
    <location>
        <begin position="186"/>
        <end position="207"/>
    </location>
</feature>
<gene>
    <name evidence="7" type="primary">COR28</name>
    <name evidence="9" type="ordered locus">At4g33980</name>
    <name evidence="10" type="ORF">F17I5.170</name>
</gene>